<sequence>MRVMGVDPGLTRCGLSLIESGRGRQLTALDVDVVRTPSDAALAQRLLAISDAVEHWLDTHHPEVVAIERVFSQLNVTTVMGTAQAGGVIALAAAKRGVDVHFHTPSEVKAAVTGNGSADKAQVTAMVTKILALQAKPTPADAADALALAICHCWRAPTIARMAEATSRAEARAAQQRHAYLAKLKAAR</sequence>
<feature type="chain" id="PRO_0000428294" description="Crossover junction endodeoxyribonuclease RuvC">
    <location>
        <begin position="1"/>
        <end position="188"/>
    </location>
</feature>
<feature type="active site" evidence="1">
    <location>
        <position position="7"/>
    </location>
</feature>
<feature type="active site" evidence="1">
    <location>
        <position position="68"/>
    </location>
</feature>
<feature type="active site" evidence="1">
    <location>
        <position position="141"/>
    </location>
</feature>
<feature type="binding site" evidence="1">
    <location>
        <position position="7"/>
    </location>
    <ligand>
        <name>Mg(2+)</name>
        <dbReference type="ChEBI" id="CHEBI:18420"/>
        <label>1</label>
    </ligand>
</feature>
<feature type="binding site" evidence="1">
    <location>
        <position position="68"/>
    </location>
    <ligand>
        <name>Mg(2+)</name>
        <dbReference type="ChEBI" id="CHEBI:18420"/>
        <label>2</label>
    </ligand>
</feature>
<feature type="binding site" evidence="1">
    <location>
        <position position="141"/>
    </location>
    <ligand>
        <name>Mg(2+)</name>
        <dbReference type="ChEBI" id="CHEBI:18420"/>
        <label>1</label>
    </ligand>
</feature>
<dbReference type="EC" id="3.1.21.10" evidence="1"/>
<dbReference type="EMBL" id="AE000516">
    <property type="protein sequence ID" value="AAK46985.1"/>
    <property type="molecule type" value="Genomic_DNA"/>
</dbReference>
<dbReference type="PIR" id="A70727">
    <property type="entry name" value="A70727"/>
</dbReference>
<dbReference type="RefSeq" id="WP_003413426.1">
    <property type="nucleotide sequence ID" value="NZ_KK341227.1"/>
</dbReference>
<dbReference type="SMR" id="P9WGV8"/>
<dbReference type="GeneID" id="45426596"/>
<dbReference type="KEGG" id="mtc:MT2671"/>
<dbReference type="PATRIC" id="fig|83331.31.peg.2878"/>
<dbReference type="HOGENOM" id="CLU_091257_0_2_11"/>
<dbReference type="Proteomes" id="UP000001020">
    <property type="component" value="Chromosome"/>
</dbReference>
<dbReference type="GO" id="GO:0005737">
    <property type="term" value="C:cytoplasm"/>
    <property type="evidence" value="ECO:0007669"/>
    <property type="project" value="UniProtKB-SubCell"/>
</dbReference>
<dbReference type="GO" id="GO:0048476">
    <property type="term" value="C:Holliday junction resolvase complex"/>
    <property type="evidence" value="ECO:0007669"/>
    <property type="project" value="UniProtKB-UniRule"/>
</dbReference>
<dbReference type="GO" id="GO:0008821">
    <property type="term" value="F:crossover junction DNA endonuclease activity"/>
    <property type="evidence" value="ECO:0007669"/>
    <property type="project" value="UniProtKB-UniRule"/>
</dbReference>
<dbReference type="GO" id="GO:0003677">
    <property type="term" value="F:DNA binding"/>
    <property type="evidence" value="ECO:0007669"/>
    <property type="project" value="UniProtKB-KW"/>
</dbReference>
<dbReference type="GO" id="GO:0000287">
    <property type="term" value="F:magnesium ion binding"/>
    <property type="evidence" value="ECO:0007669"/>
    <property type="project" value="UniProtKB-UniRule"/>
</dbReference>
<dbReference type="GO" id="GO:0006310">
    <property type="term" value="P:DNA recombination"/>
    <property type="evidence" value="ECO:0007669"/>
    <property type="project" value="UniProtKB-UniRule"/>
</dbReference>
<dbReference type="GO" id="GO:0006281">
    <property type="term" value="P:DNA repair"/>
    <property type="evidence" value="ECO:0007669"/>
    <property type="project" value="UniProtKB-UniRule"/>
</dbReference>
<dbReference type="CDD" id="cd16962">
    <property type="entry name" value="RuvC"/>
    <property type="match status" value="1"/>
</dbReference>
<dbReference type="FunFam" id="3.30.420.10:FF:000002">
    <property type="entry name" value="Crossover junction endodeoxyribonuclease RuvC"/>
    <property type="match status" value="1"/>
</dbReference>
<dbReference type="Gene3D" id="3.30.420.10">
    <property type="entry name" value="Ribonuclease H-like superfamily/Ribonuclease H"/>
    <property type="match status" value="1"/>
</dbReference>
<dbReference type="HAMAP" id="MF_00034">
    <property type="entry name" value="RuvC"/>
    <property type="match status" value="1"/>
</dbReference>
<dbReference type="InterPro" id="IPR012337">
    <property type="entry name" value="RNaseH-like_sf"/>
</dbReference>
<dbReference type="InterPro" id="IPR036397">
    <property type="entry name" value="RNaseH_sf"/>
</dbReference>
<dbReference type="InterPro" id="IPR020563">
    <property type="entry name" value="X-over_junc_endoDNase_Mg_BS"/>
</dbReference>
<dbReference type="InterPro" id="IPR002176">
    <property type="entry name" value="X-over_junc_endoDNase_RuvC"/>
</dbReference>
<dbReference type="NCBIfam" id="TIGR00228">
    <property type="entry name" value="ruvC"/>
    <property type="match status" value="1"/>
</dbReference>
<dbReference type="PANTHER" id="PTHR30194">
    <property type="entry name" value="CROSSOVER JUNCTION ENDODEOXYRIBONUCLEASE RUVC"/>
    <property type="match status" value="1"/>
</dbReference>
<dbReference type="PANTHER" id="PTHR30194:SF3">
    <property type="entry name" value="CROSSOVER JUNCTION ENDODEOXYRIBONUCLEASE RUVC"/>
    <property type="match status" value="1"/>
</dbReference>
<dbReference type="Pfam" id="PF02075">
    <property type="entry name" value="RuvC"/>
    <property type="match status" value="1"/>
</dbReference>
<dbReference type="PRINTS" id="PR00696">
    <property type="entry name" value="RSOLVASERUVC"/>
</dbReference>
<dbReference type="SUPFAM" id="SSF53098">
    <property type="entry name" value="Ribonuclease H-like"/>
    <property type="match status" value="1"/>
</dbReference>
<dbReference type="PROSITE" id="PS01321">
    <property type="entry name" value="RUVC"/>
    <property type="match status" value="1"/>
</dbReference>
<keyword id="KW-0963">Cytoplasm</keyword>
<keyword id="KW-0227">DNA damage</keyword>
<keyword id="KW-0233">DNA recombination</keyword>
<keyword id="KW-0234">DNA repair</keyword>
<keyword id="KW-0238">DNA-binding</keyword>
<keyword id="KW-0255">Endonuclease</keyword>
<keyword id="KW-0378">Hydrolase</keyword>
<keyword id="KW-0460">Magnesium</keyword>
<keyword id="KW-0479">Metal-binding</keyword>
<keyword id="KW-0540">Nuclease</keyword>
<keyword id="KW-1185">Reference proteome</keyword>
<reference key="1">
    <citation type="journal article" date="2002" name="J. Bacteriol.">
        <title>Whole-genome comparison of Mycobacterium tuberculosis clinical and laboratory strains.</title>
        <authorList>
            <person name="Fleischmann R.D."/>
            <person name="Alland D."/>
            <person name="Eisen J.A."/>
            <person name="Carpenter L."/>
            <person name="White O."/>
            <person name="Peterson J.D."/>
            <person name="DeBoy R.T."/>
            <person name="Dodson R.J."/>
            <person name="Gwinn M.L."/>
            <person name="Haft D.H."/>
            <person name="Hickey E.K."/>
            <person name="Kolonay J.F."/>
            <person name="Nelson W.C."/>
            <person name="Umayam L.A."/>
            <person name="Ermolaeva M.D."/>
            <person name="Salzberg S.L."/>
            <person name="Delcher A."/>
            <person name="Utterback T.R."/>
            <person name="Weidman J.F."/>
            <person name="Khouri H.M."/>
            <person name="Gill J."/>
            <person name="Mikula A."/>
            <person name="Bishai W."/>
            <person name="Jacobs W.R. Jr."/>
            <person name="Venter J.C."/>
            <person name="Fraser C.M."/>
        </authorList>
    </citation>
    <scope>NUCLEOTIDE SEQUENCE [LARGE SCALE GENOMIC DNA]</scope>
    <source>
        <strain>CDC 1551 / Oshkosh</strain>
    </source>
</reference>
<name>RUVC_MYCTO</name>
<accession>P9WGV8</accession>
<accession>L0TA48</accession>
<accession>P66760</accession>
<accession>Q50627</accession>
<protein>
    <recommendedName>
        <fullName evidence="1">Crossover junction endodeoxyribonuclease RuvC</fullName>
        <ecNumber evidence="1">3.1.21.10</ecNumber>
    </recommendedName>
    <alternativeName>
        <fullName evidence="1">Holliday junction nuclease RuvC</fullName>
    </alternativeName>
    <alternativeName>
        <fullName evidence="1">Holliday junction resolvase RuvC</fullName>
    </alternativeName>
</protein>
<organism>
    <name type="scientific">Mycobacterium tuberculosis (strain CDC 1551 / Oshkosh)</name>
    <dbReference type="NCBI Taxonomy" id="83331"/>
    <lineage>
        <taxon>Bacteria</taxon>
        <taxon>Bacillati</taxon>
        <taxon>Actinomycetota</taxon>
        <taxon>Actinomycetes</taxon>
        <taxon>Mycobacteriales</taxon>
        <taxon>Mycobacteriaceae</taxon>
        <taxon>Mycobacterium</taxon>
        <taxon>Mycobacterium tuberculosis complex</taxon>
    </lineage>
</organism>
<gene>
    <name evidence="1" type="primary">ruvC</name>
    <name type="ordered locus">MT2671</name>
</gene>
<proteinExistence type="inferred from homology"/>
<comment type="function">
    <text evidence="1">The RuvA-RuvB-RuvC complex processes Holliday junction (HJ) DNA during genetic recombination and DNA repair. Endonuclease that resolves HJ intermediates. Cleaves cruciform DNA by making single-stranded nicks across the HJ at symmetrical positions within the homologous arms, yielding a 5'-phosphate and a 3'-hydroxyl group; requires a central core of homology in the junction. The consensus cleavage sequence is 5'-(A/T)TT(C/G)-3'. Cleavage occurs on the 3'-side of the TT dinucleotide at the point of strand exchange. HJ branch migration catalyzed by RuvA-RuvB allows RuvC to scan DNA until it finds its consensus sequence, where it cleaves and resolves the cruciform DNA.</text>
</comment>
<comment type="catalytic activity">
    <reaction evidence="1">
        <text>Endonucleolytic cleavage at a junction such as a reciprocal single-stranded crossover between two homologous DNA duplexes (Holliday junction).</text>
        <dbReference type="EC" id="3.1.21.10"/>
    </reaction>
</comment>
<comment type="cofactor">
    <cofactor evidence="1">
        <name>Mg(2+)</name>
        <dbReference type="ChEBI" id="CHEBI:18420"/>
    </cofactor>
    <text evidence="1">Binds 2 Mg(2+) ion per subunit.</text>
</comment>
<comment type="subunit">
    <text evidence="1">Homodimer which binds Holliday junction (HJ) DNA. The HJ becomes 2-fold symmetrical on binding to RuvC with unstacked arms; it has a different conformation from HJ DNA in complex with RuvA. In the full resolvosome a probable DNA-RuvA(4)-RuvB(12)-RuvC(2) complex forms which resolves the HJ.</text>
</comment>
<comment type="subcellular location">
    <subcellularLocation>
        <location evidence="1">Cytoplasm</location>
    </subcellularLocation>
</comment>
<comment type="similarity">
    <text evidence="1 2">Belongs to the RuvC family.</text>
</comment>
<evidence type="ECO:0000255" key="1">
    <source>
        <dbReference type="HAMAP-Rule" id="MF_00034"/>
    </source>
</evidence>
<evidence type="ECO:0000305" key="2"/>